<feature type="chain" id="PRO_1000059563" description="Chaperone protein DnaK">
    <location>
        <begin position="1"/>
        <end position="642"/>
    </location>
</feature>
<feature type="region of interest" description="Disordered" evidence="2">
    <location>
        <begin position="609"/>
        <end position="642"/>
    </location>
</feature>
<feature type="compositionally biased region" description="Acidic residues" evidence="2">
    <location>
        <begin position="628"/>
        <end position="642"/>
    </location>
</feature>
<feature type="modified residue" description="Phosphothreonine; by autocatalysis" evidence="1">
    <location>
        <position position="201"/>
    </location>
</feature>
<proteinExistence type="inferred from homology"/>
<comment type="function">
    <text evidence="1">Acts as a chaperone.</text>
</comment>
<comment type="induction">
    <text evidence="1">By stress conditions e.g. heat shock.</text>
</comment>
<comment type="similarity">
    <text evidence="1">Belongs to the heat shock protein 70 family.</text>
</comment>
<organism>
    <name type="scientific">Francisella tularensis subsp. holarctica (strain LVS)</name>
    <dbReference type="NCBI Taxonomy" id="376619"/>
    <lineage>
        <taxon>Bacteria</taxon>
        <taxon>Pseudomonadati</taxon>
        <taxon>Pseudomonadota</taxon>
        <taxon>Gammaproteobacteria</taxon>
        <taxon>Thiotrichales</taxon>
        <taxon>Francisellaceae</taxon>
        <taxon>Francisella</taxon>
    </lineage>
</organism>
<reference key="1">
    <citation type="submission" date="2006-03" db="EMBL/GenBank/DDBJ databases">
        <title>Complete genome sequence of Francisella tularensis LVS (Live Vaccine Strain).</title>
        <authorList>
            <person name="Chain P."/>
            <person name="Larimer F."/>
            <person name="Land M."/>
            <person name="Stilwagen S."/>
            <person name="Larsson P."/>
            <person name="Bearden S."/>
            <person name="Chu M."/>
            <person name="Oyston P."/>
            <person name="Forsman M."/>
            <person name="Andersson S."/>
            <person name="Lindler L."/>
            <person name="Titball R."/>
            <person name="Garcia E."/>
        </authorList>
    </citation>
    <scope>NUCLEOTIDE SEQUENCE [LARGE SCALE GENOMIC DNA]</scope>
    <source>
        <strain>LVS</strain>
    </source>
</reference>
<dbReference type="EMBL" id="AM233362">
    <property type="protein sequence ID" value="CAJ79630.1"/>
    <property type="molecule type" value="Genomic_DNA"/>
</dbReference>
<dbReference type="RefSeq" id="WP_003016262.1">
    <property type="nucleotide sequence ID" value="NZ_CP009694.1"/>
</dbReference>
<dbReference type="SMR" id="Q2A328"/>
<dbReference type="GeneID" id="75264984"/>
<dbReference type="KEGG" id="ftl:FTL_1191"/>
<dbReference type="Proteomes" id="UP000001944">
    <property type="component" value="Chromosome"/>
</dbReference>
<dbReference type="GO" id="GO:0005524">
    <property type="term" value="F:ATP binding"/>
    <property type="evidence" value="ECO:0007669"/>
    <property type="project" value="UniProtKB-UniRule"/>
</dbReference>
<dbReference type="GO" id="GO:0140662">
    <property type="term" value="F:ATP-dependent protein folding chaperone"/>
    <property type="evidence" value="ECO:0007669"/>
    <property type="project" value="InterPro"/>
</dbReference>
<dbReference type="GO" id="GO:0051082">
    <property type="term" value="F:unfolded protein binding"/>
    <property type="evidence" value="ECO:0007669"/>
    <property type="project" value="InterPro"/>
</dbReference>
<dbReference type="CDD" id="cd10234">
    <property type="entry name" value="ASKHA_NBD_HSP70_DnaK-like"/>
    <property type="match status" value="1"/>
</dbReference>
<dbReference type="FunFam" id="2.60.34.10:FF:000014">
    <property type="entry name" value="Chaperone protein DnaK HSP70"/>
    <property type="match status" value="1"/>
</dbReference>
<dbReference type="FunFam" id="1.20.1270.10:FF:000001">
    <property type="entry name" value="Molecular chaperone DnaK"/>
    <property type="match status" value="1"/>
</dbReference>
<dbReference type="FunFam" id="3.30.420.40:FF:000004">
    <property type="entry name" value="Molecular chaperone DnaK"/>
    <property type="match status" value="1"/>
</dbReference>
<dbReference type="FunFam" id="3.90.640.10:FF:000003">
    <property type="entry name" value="Molecular chaperone DnaK"/>
    <property type="match status" value="1"/>
</dbReference>
<dbReference type="Gene3D" id="1.20.1270.10">
    <property type="match status" value="1"/>
</dbReference>
<dbReference type="Gene3D" id="3.30.420.40">
    <property type="match status" value="2"/>
</dbReference>
<dbReference type="Gene3D" id="3.90.640.10">
    <property type="entry name" value="Actin, Chain A, domain 4"/>
    <property type="match status" value="1"/>
</dbReference>
<dbReference type="Gene3D" id="2.60.34.10">
    <property type="entry name" value="Substrate Binding Domain Of DNAk, Chain A, domain 1"/>
    <property type="match status" value="1"/>
</dbReference>
<dbReference type="HAMAP" id="MF_00332">
    <property type="entry name" value="DnaK"/>
    <property type="match status" value="1"/>
</dbReference>
<dbReference type="InterPro" id="IPR043129">
    <property type="entry name" value="ATPase_NBD"/>
</dbReference>
<dbReference type="InterPro" id="IPR012725">
    <property type="entry name" value="Chaperone_DnaK"/>
</dbReference>
<dbReference type="InterPro" id="IPR018181">
    <property type="entry name" value="Heat_shock_70_CS"/>
</dbReference>
<dbReference type="InterPro" id="IPR029048">
    <property type="entry name" value="HSP70_C_sf"/>
</dbReference>
<dbReference type="InterPro" id="IPR029047">
    <property type="entry name" value="HSP70_peptide-bd_sf"/>
</dbReference>
<dbReference type="InterPro" id="IPR013126">
    <property type="entry name" value="Hsp_70_fam"/>
</dbReference>
<dbReference type="NCBIfam" id="NF001413">
    <property type="entry name" value="PRK00290.1"/>
    <property type="match status" value="1"/>
</dbReference>
<dbReference type="NCBIfam" id="NF003520">
    <property type="entry name" value="PRK05183.1"/>
    <property type="match status" value="1"/>
</dbReference>
<dbReference type="NCBIfam" id="TIGR02350">
    <property type="entry name" value="prok_dnaK"/>
    <property type="match status" value="1"/>
</dbReference>
<dbReference type="PANTHER" id="PTHR19375">
    <property type="entry name" value="HEAT SHOCK PROTEIN 70KDA"/>
    <property type="match status" value="1"/>
</dbReference>
<dbReference type="Pfam" id="PF00012">
    <property type="entry name" value="HSP70"/>
    <property type="match status" value="1"/>
</dbReference>
<dbReference type="PRINTS" id="PR00301">
    <property type="entry name" value="HEATSHOCK70"/>
</dbReference>
<dbReference type="SUPFAM" id="SSF53067">
    <property type="entry name" value="Actin-like ATPase domain"/>
    <property type="match status" value="2"/>
</dbReference>
<dbReference type="SUPFAM" id="SSF100934">
    <property type="entry name" value="Heat shock protein 70kD (HSP70), C-terminal subdomain"/>
    <property type="match status" value="1"/>
</dbReference>
<dbReference type="SUPFAM" id="SSF100920">
    <property type="entry name" value="Heat shock protein 70kD (HSP70), peptide-binding domain"/>
    <property type="match status" value="1"/>
</dbReference>
<dbReference type="PROSITE" id="PS00297">
    <property type="entry name" value="HSP70_1"/>
    <property type="match status" value="1"/>
</dbReference>
<dbReference type="PROSITE" id="PS00329">
    <property type="entry name" value="HSP70_2"/>
    <property type="match status" value="1"/>
</dbReference>
<dbReference type="PROSITE" id="PS01036">
    <property type="entry name" value="HSP70_3"/>
    <property type="match status" value="1"/>
</dbReference>
<accession>Q2A328</accession>
<keyword id="KW-0067">ATP-binding</keyword>
<keyword id="KW-0143">Chaperone</keyword>
<keyword id="KW-0547">Nucleotide-binding</keyword>
<keyword id="KW-0597">Phosphoprotein</keyword>
<keyword id="KW-1185">Reference proteome</keyword>
<keyword id="KW-0346">Stress response</keyword>
<sequence length="642" mass="69182">MGKIIGIDLGTTNSCLAIMDGKTAKVIENAEGHRTTPSVVAYTDSGEILVGQAAKRQAVTNPDNTFFAIKRLIGRKYDDKAVQEDIKKKVPYAVIKADNGDAWVATKEGKKMAPPQVSAEVLRKMKKTAEDYLGEPVTEAVITVPAYFNDSQRQATKDAGKIAGLEVKRIINEPTAAALAYGVDSKKGEQTVAVYDLGGGTFDISIIEIADVDGDNQIEVLSTNGDTFLGGEDFDLALMNYLIDEFKKEQGIDLHNDKLALQRVREAAEKAKVELSSAQQTDVNLPYITADATGPKHLNIKVTRAKFESLVSDLVMRSLEPCKKALEDAGLSKSDITEVLLVGGQTRMPLVQEKVKEFFGKEPRKDVNPDEAVAVGAAIQGGVLAGDVKDVLLLDVTPLSLGIETMGGVMTKLIERNTTIPTKKSQVFSTAEDNQPAVTIHVLQGEREMASANKSLGRFDLADIPPAPRGMPQIEVTFDIDANGILNVSAKDKATGKEQNIVIKSSSGLSEEDIEKMVQDAEANAEADKKFHDLVTARNTADNLIHSSRKAIQELGDKVTAAEKEKIEEACKELEAATKGDDKQAIEAKTKALEEAFAPIAQKAYAEQAQAAGAQGGAKAEEPKKEEDVVDADFEDVEDDKK</sequence>
<gene>
    <name evidence="1" type="primary">dnaK</name>
    <name type="ordered locus">FTL_1191</name>
</gene>
<evidence type="ECO:0000255" key="1">
    <source>
        <dbReference type="HAMAP-Rule" id="MF_00332"/>
    </source>
</evidence>
<evidence type="ECO:0000256" key="2">
    <source>
        <dbReference type="SAM" id="MobiDB-lite"/>
    </source>
</evidence>
<protein>
    <recommendedName>
        <fullName evidence="1">Chaperone protein DnaK</fullName>
    </recommendedName>
    <alternativeName>
        <fullName evidence="1">HSP70</fullName>
    </alternativeName>
    <alternativeName>
        <fullName evidence="1">Heat shock 70 kDa protein</fullName>
    </alternativeName>
    <alternativeName>
        <fullName evidence="1">Heat shock protein 70</fullName>
    </alternativeName>
</protein>
<name>DNAK_FRATH</name>